<feature type="chain" id="PRO_0000065907" description="Vacuolar protein sorting-associated protein 64">
    <location>
        <begin position="1"/>
        <end position="604"/>
    </location>
</feature>
<feature type="topological domain" description="Cytoplasmic" evidence="1">
    <location>
        <begin position="1"/>
        <end position="578"/>
    </location>
</feature>
<feature type="transmembrane region" description="Helical; Anchor for type IV membrane protein" evidence="1">
    <location>
        <begin position="579"/>
        <end position="598"/>
    </location>
</feature>
<feature type="topological domain" description="Lumenal" evidence="1">
    <location>
        <begin position="599"/>
        <end position="604"/>
    </location>
</feature>
<feature type="domain" description="FHA" evidence="2">
    <location>
        <begin position="185"/>
        <end position="257"/>
    </location>
</feature>
<feature type="region of interest" description="Disordered" evidence="3">
    <location>
        <begin position="1"/>
        <end position="89"/>
    </location>
</feature>
<feature type="region of interest" description="Disordered" evidence="3">
    <location>
        <begin position="539"/>
        <end position="561"/>
    </location>
</feature>
<feature type="coiled-coil region" evidence="1">
    <location>
        <begin position="404"/>
        <end position="563"/>
    </location>
</feature>
<feature type="compositionally biased region" description="Polar residues" evidence="3">
    <location>
        <begin position="22"/>
        <end position="34"/>
    </location>
</feature>
<feature type="compositionally biased region" description="Low complexity" evidence="3">
    <location>
        <begin position="44"/>
        <end position="57"/>
    </location>
</feature>
<feature type="compositionally biased region" description="Low complexity" evidence="3">
    <location>
        <begin position="77"/>
        <end position="89"/>
    </location>
</feature>
<feature type="compositionally biased region" description="Basic and acidic residues" evidence="3">
    <location>
        <begin position="548"/>
        <end position="560"/>
    </location>
</feature>
<feature type="strand" evidence="8">
    <location>
        <begin position="160"/>
        <end position="169"/>
    </location>
</feature>
<feature type="strand" evidence="8">
    <location>
        <begin position="174"/>
        <end position="177"/>
    </location>
</feature>
<feature type="strand" evidence="8">
    <location>
        <begin position="185"/>
        <end position="188"/>
    </location>
</feature>
<feature type="helix" evidence="8">
    <location>
        <begin position="202"/>
        <end position="208"/>
    </location>
</feature>
<feature type="strand" evidence="8">
    <location>
        <begin position="215"/>
        <end position="217"/>
    </location>
</feature>
<feature type="strand" evidence="8">
    <location>
        <begin position="228"/>
        <end position="232"/>
    </location>
</feature>
<feature type="turn" evidence="8">
    <location>
        <begin position="234"/>
        <end position="236"/>
    </location>
</feature>
<feature type="strand" evidence="8">
    <location>
        <begin position="239"/>
        <end position="243"/>
    </location>
</feature>
<feature type="strand" evidence="8">
    <location>
        <begin position="250"/>
        <end position="252"/>
    </location>
</feature>
<feature type="strand" evidence="8">
    <location>
        <begin position="262"/>
        <end position="264"/>
    </location>
</feature>
<feature type="strand" evidence="8">
    <location>
        <begin position="269"/>
        <end position="272"/>
    </location>
</feature>
<feature type="turn" evidence="8">
    <location>
        <begin position="280"/>
        <end position="282"/>
    </location>
</feature>
<feature type="strand" evidence="8">
    <location>
        <begin position="285"/>
        <end position="294"/>
    </location>
</feature>
<gene>
    <name type="primary">VPS64</name>
    <name type="synonym">FAR9</name>
    <name type="ordered locus">YDR200C</name>
    <name type="ORF">YD9346.10C</name>
</gene>
<organism>
    <name type="scientific">Saccharomyces cerevisiae (strain ATCC 204508 / S288c)</name>
    <name type="common">Baker's yeast</name>
    <dbReference type="NCBI Taxonomy" id="559292"/>
    <lineage>
        <taxon>Eukaryota</taxon>
        <taxon>Fungi</taxon>
        <taxon>Dikarya</taxon>
        <taxon>Ascomycota</taxon>
        <taxon>Saccharomycotina</taxon>
        <taxon>Saccharomycetes</taxon>
        <taxon>Saccharomycetales</taxon>
        <taxon>Saccharomycetaceae</taxon>
        <taxon>Saccharomyces</taxon>
    </lineage>
</organism>
<sequence length="604" mass="67284">MVELEKRRRPPPQLQHSPYVRDQSNSQGMTKTPETSPPKRPMGRARSNSRSSGSRSNVDIDQYTIPPGLDLLPTASSPPSVHQVSQQQQLSPILANKIRSPFENQSQDQNDNSIDPTPAGQVTIPVEAVSPPALDELSKFQNGSTETLFRTGSPRKKHTHIIILKSLNATFETKFLVVPFKPDGLKLGRPVTNSVNKNNSGSKRDLFSQQVRPDNGNFDSRVLSRNHACLSCDPTSGKIYIRDLKSSNGTFVNGVKIRQNDVELKVGDTVDLGTDIDSKFEHRKISAYVEEISVIPLMNTVSDPTNLVMKKQDHTNKNNGNSTNINGIKIDRGHHNQHIPIRSHLKENYTEAGVTSATTAQRAAFEAAMFGDINNSELDDDILGPETEVLSGIFINNSAGTSINLINMIKTLTTELSLEKQELEKLHSMQNFMQNYTINLDFINKHMIDMNEKHLLKLSTALQKTLSENNDALLKESEDQLKEIKQQNNKVKSACSLKEKQNHEKLQELESELRELNLQIEEERGKNLVLTQSNFNGGINNDNNAKVKQNDSREEKKDTEDTLISTEELGVVEGKRTRVSKGMLFGVVAISFGLVATAVKQLPQ</sequence>
<comment type="function">
    <text evidence="4 5">Participates in the control of the reentry into the cell cycle following pheromone treatment. Involved in vacuolar protein sorting.</text>
</comment>
<comment type="subunit">
    <text>Component of a complex at least composed of FAR3, FAR7, FAR8, FAR10, FAR11 and VPS64.</text>
</comment>
<comment type="interaction">
    <interactant intactId="EBI-30418">
        <id>Q03944</id>
    </interactant>
    <interactant intactId="EBI-6789">
        <id>P46671</id>
        <label>FAR3</label>
    </interactant>
    <organismsDiffer>false</organismsDiffer>
    <experiments>6</experiments>
</comment>
<comment type="interaction">
    <interactant intactId="EBI-30418">
        <id>Q03944</id>
    </interactant>
    <interactant intactId="EBI-22932">
        <id>P43592</id>
        <label>FAR7</label>
    </interactant>
    <organismsDiffer>false</organismsDiffer>
    <experiments>3</experiments>
</comment>
<comment type="subcellular location">
    <subcellularLocation>
        <location evidence="7">Endoplasmic reticulum membrane</location>
        <topology evidence="7">Single-pass type IV membrane protein</topology>
    </subcellularLocation>
</comment>
<comment type="miscellaneous">
    <text evidence="6">Present with 377 molecules/cell in log phase SD medium.</text>
</comment>
<dbReference type="EMBL" id="Z48784">
    <property type="protein sequence ID" value="CAA88712.1"/>
    <property type="molecule type" value="Genomic_DNA"/>
</dbReference>
<dbReference type="EMBL" id="BK006938">
    <property type="protein sequence ID" value="DAA12042.1"/>
    <property type="molecule type" value="Genomic_DNA"/>
</dbReference>
<dbReference type="PIR" id="S52706">
    <property type="entry name" value="S52706"/>
</dbReference>
<dbReference type="RefSeq" id="NP_010486.3">
    <property type="nucleotide sequence ID" value="NM_001180508.3"/>
</dbReference>
<dbReference type="PDB" id="6A8W">
    <property type="method" value="X-ray"/>
    <property type="resolution" value="1.84 A"/>
    <property type="chains" value="A=160-295"/>
</dbReference>
<dbReference type="PDBsum" id="6A8W"/>
<dbReference type="SMR" id="Q03944"/>
<dbReference type="BioGRID" id="32251">
    <property type="interactions" value="224"/>
</dbReference>
<dbReference type="ComplexPortal" id="CPX-1197">
    <property type="entry name" value="FAR complex"/>
</dbReference>
<dbReference type="DIP" id="DIP-1829N"/>
<dbReference type="FunCoup" id="Q03944">
    <property type="interactions" value="168"/>
</dbReference>
<dbReference type="IntAct" id="Q03944">
    <property type="interactions" value="31"/>
</dbReference>
<dbReference type="MINT" id="Q03944"/>
<dbReference type="STRING" id="4932.YDR200C"/>
<dbReference type="GlyGen" id="Q03944">
    <property type="glycosylation" value="1 site"/>
</dbReference>
<dbReference type="iPTMnet" id="Q03944"/>
<dbReference type="PaxDb" id="4932-YDR200C"/>
<dbReference type="PeptideAtlas" id="Q03944"/>
<dbReference type="EnsemblFungi" id="YDR200C_mRNA">
    <property type="protein sequence ID" value="YDR200C"/>
    <property type="gene ID" value="YDR200C"/>
</dbReference>
<dbReference type="GeneID" id="851781"/>
<dbReference type="KEGG" id="sce:YDR200C"/>
<dbReference type="AGR" id="SGD:S000002608"/>
<dbReference type="SGD" id="S000002608">
    <property type="gene designation" value="VPS64"/>
</dbReference>
<dbReference type="VEuPathDB" id="FungiDB:YDR200C"/>
<dbReference type="eggNOG" id="KOG3872">
    <property type="taxonomic scope" value="Eukaryota"/>
</dbReference>
<dbReference type="GeneTree" id="ENSGT00940000176673"/>
<dbReference type="HOGENOM" id="CLU_031992_0_0_1"/>
<dbReference type="InParanoid" id="Q03944"/>
<dbReference type="OMA" id="HACLSCD"/>
<dbReference type="OrthoDB" id="687730at2759"/>
<dbReference type="BioCyc" id="YEAST:G3O-29785-MONOMER"/>
<dbReference type="BioGRID-ORCS" id="851781">
    <property type="hits" value="0 hits in 10 CRISPR screens"/>
</dbReference>
<dbReference type="PRO" id="PR:Q03944"/>
<dbReference type="Proteomes" id="UP000002311">
    <property type="component" value="Chromosome IV"/>
</dbReference>
<dbReference type="RNAct" id="Q03944">
    <property type="molecule type" value="protein"/>
</dbReference>
<dbReference type="GO" id="GO:0005737">
    <property type="term" value="C:cytoplasm"/>
    <property type="evidence" value="ECO:0007005"/>
    <property type="project" value="SGD"/>
</dbReference>
<dbReference type="GO" id="GO:0005783">
    <property type="term" value="C:endoplasmic reticulum"/>
    <property type="evidence" value="ECO:0000314"/>
    <property type="project" value="SGD"/>
</dbReference>
<dbReference type="GO" id="GO:0005789">
    <property type="term" value="C:endoplasmic reticulum membrane"/>
    <property type="evidence" value="ECO:0000314"/>
    <property type="project" value="SGD"/>
</dbReference>
<dbReference type="GO" id="GO:0005793">
    <property type="term" value="C:endoplasmic reticulum-Golgi intermediate compartment"/>
    <property type="evidence" value="ECO:0000314"/>
    <property type="project" value="SGD"/>
</dbReference>
<dbReference type="GO" id="GO:0090443">
    <property type="term" value="C:FAR/SIN/STRIPAK complex"/>
    <property type="evidence" value="ECO:0000303"/>
    <property type="project" value="ComplexPortal"/>
</dbReference>
<dbReference type="GO" id="GO:0071444">
    <property type="term" value="P:cellular response to pheromone"/>
    <property type="evidence" value="ECO:0000303"/>
    <property type="project" value="ComplexPortal"/>
</dbReference>
<dbReference type="GO" id="GO:0006623">
    <property type="term" value="P:protein targeting to vacuole"/>
    <property type="evidence" value="ECO:0007001"/>
    <property type="project" value="SGD"/>
</dbReference>
<dbReference type="GO" id="GO:0000321">
    <property type="term" value="P:re-entry into mitotic cell cycle after pheromone arrest"/>
    <property type="evidence" value="ECO:0000316"/>
    <property type="project" value="SGD"/>
</dbReference>
<dbReference type="GO" id="GO:0051726">
    <property type="term" value="P:regulation of cell cycle"/>
    <property type="evidence" value="ECO:0000303"/>
    <property type="project" value="ComplexPortal"/>
</dbReference>
<dbReference type="GO" id="GO:0031929">
    <property type="term" value="P:TOR signaling"/>
    <property type="evidence" value="ECO:0000316"/>
    <property type="project" value="SGD"/>
</dbReference>
<dbReference type="CDD" id="cd22695">
    <property type="entry name" value="FHA_VPS64-like"/>
    <property type="match status" value="1"/>
</dbReference>
<dbReference type="FunFam" id="2.60.200.20:FF:000067">
    <property type="entry name" value="Vacuolar sorting protein"/>
    <property type="match status" value="1"/>
</dbReference>
<dbReference type="Gene3D" id="2.60.200.20">
    <property type="match status" value="1"/>
</dbReference>
<dbReference type="InterPro" id="IPR051176">
    <property type="entry name" value="Cent_Immune-Sig_Mod"/>
</dbReference>
<dbReference type="InterPro" id="IPR000253">
    <property type="entry name" value="FHA_dom"/>
</dbReference>
<dbReference type="InterPro" id="IPR008984">
    <property type="entry name" value="SMAD_FHA_dom_sf"/>
</dbReference>
<dbReference type="PANTHER" id="PTHR15715">
    <property type="entry name" value="CENTROSOMAL PROTEIN OF 170 KDA"/>
    <property type="match status" value="1"/>
</dbReference>
<dbReference type="PANTHER" id="PTHR15715:SF37">
    <property type="entry name" value="LD47843P"/>
    <property type="match status" value="1"/>
</dbReference>
<dbReference type="Pfam" id="PF00498">
    <property type="entry name" value="FHA"/>
    <property type="match status" value="1"/>
</dbReference>
<dbReference type="SMART" id="SM00240">
    <property type="entry name" value="FHA"/>
    <property type="match status" value="1"/>
</dbReference>
<dbReference type="SUPFAM" id="SSF49879">
    <property type="entry name" value="SMAD/FHA domain"/>
    <property type="match status" value="1"/>
</dbReference>
<dbReference type="PROSITE" id="PS50006">
    <property type="entry name" value="FHA_DOMAIN"/>
    <property type="match status" value="1"/>
</dbReference>
<accession>Q03944</accession>
<accession>D6VSI2</accession>
<name>VPS64_YEAST</name>
<evidence type="ECO:0000255" key="1"/>
<evidence type="ECO:0000255" key="2">
    <source>
        <dbReference type="PROSITE-ProRule" id="PRU00086"/>
    </source>
</evidence>
<evidence type="ECO:0000256" key="3">
    <source>
        <dbReference type="SAM" id="MobiDB-lite"/>
    </source>
</evidence>
<evidence type="ECO:0000269" key="4">
    <source>
    </source>
</evidence>
<evidence type="ECO:0000269" key="5">
    <source>
    </source>
</evidence>
<evidence type="ECO:0000269" key="6">
    <source>
    </source>
</evidence>
<evidence type="ECO:0000305" key="7"/>
<evidence type="ECO:0007829" key="8">
    <source>
        <dbReference type="PDB" id="6A8W"/>
    </source>
</evidence>
<protein>
    <recommendedName>
        <fullName>Vacuolar protein sorting-associated protein 64</fullName>
    </recommendedName>
    <alternativeName>
        <fullName>Factor arrest protein 9</fullName>
    </alternativeName>
</protein>
<proteinExistence type="evidence at protein level"/>
<reference key="1">
    <citation type="journal article" date="1997" name="Nature">
        <title>The nucleotide sequence of Saccharomyces cerevisiae chromosome IV.</title>
        <authorList>
            <person name="Jacq C."/>
            <person name="Alt-Moerbe J."/>
            <person name="Andre B."/>
            <person name="Arnold W."/>
            <person name="Bahr A."/>
            <person name="Ballesta J.P.G."/>
            <person name="Bargues M."/>
            <person name="Baron L."/>
            <person name="Becker A."/>
            <person name="Biteau N."/>
            <person name="Bloecker H."/>
            <person name="Blugeon C."/>
            <person name="Boskovic J."/>
            <person name="Brandt P."/>
            <person name="Brueckner M."/>
            <person name="Buitrago M.J."/>
            <person name="Coster F."/>
            <person name="Delaveau T."/>
            <person name="del Rey F."/>
            <person name="Dujon B."/>
            <person name="Eide L.G."/>
            <person name="Garcia-Cantalejo J.M."/>
            <person name="Goffeau A."/>
            <person name="Gomez-Peris A."/>
            <person name="Granotier C."/>
            <person name="Hanemann V."/>
            <person name="Hankeln T."/>
            <person name="Hoheisel J.D."/>
            <person name="Jaeger W."/>
            <person name="Jimenez A."/>
            <person name="Jonniaux J.-L."/>
            <person name="Kraemer C."/>
            <person name="Kuester H."/>
            <person name="Laamanen P."/>
            <person name="Legros Y."/>
            <person name="Louis E.J."/>
            <person name="Moeller-Rieker S."/>
            <person name="Monnet A."/>
            <person name="Moro M."/>
            <person name="Mueller-Auer S."/>
            <person name="Nussbaumer B."/>
            <person name="Paricio N."/>
            <person name="Paulin L."/>
            <person name="Perea J."/>
            <person name="Perez-Alonso M."/>
            <person name="Perez-Ortin J.E."/>
            <person name="Pohl T.M."/>
            <person name="Prydz H."/>
            <person name="Purnelle B."/>
            <person name="Rasmussen S.W."/>
            <person name="Remacha M.A."/>
            <person name="Revuelta J.L."/>
            <person name="Rieger M."/>
            <person name="Salom D."/>
            <person name="Saluz H.P."/>
            <person name="Saiz J.E."/>
            <person name="Saren A.-M."/>
            <person name="Schaefer M."/>
            <person name="Scharfe M."/>
            <person name="Schmidt E.R."/>
            <person name="Schneider C."/>
            <person name="Scholler P."/>
            <person name="Schwarz S."/>
            <person name="Soler-Mira A."/>
            <person name="Urrestarazu L.A."/>
            <person name="Verhasselt P."/>
            <person name="Vissers S."/>
            <person name="Voet M."/>
            <person name="Volckaert G."/>
            <person name="Wagner G."/>
            <person name="Wambutt R."/>
            <person name="Wedler E."/>
            <person name="Wedler H."/>
            <person name="Woelfl S."/>
            <person name="Harris D.E."/>
            <person name="Bowman S."/>
            <person name="Brown D."/>
            <person name="Churcher C.M."/>
            <person name="Connor R."/>
            <person name="Dedman K."/>
            <person name="Gentles S."/>
            <person name="Hamlin N."/>
            <person name="Hunt S."/>
            <person name="Jones L."/>
            <person name="McDonald S."/>
            <person name="Murphy L.D."/>
            <person name="Niblett D."/>
            <person name="Odell C."/>
            <person name="Oliver K."/>
            <person name="Rajandream M.A."/>
            <person name="Richards C."/>
            <person name="Shore L."/>
            <person name="Walsh S.V."/>
            <person name="Barrell B.G."/>
            <person name="Dietrich F.S."/>
            <person name="Mulligan J.T."/>
            <person name="Allen E."/>
            <person name="Araujo R."/>
            <person name="Aviles E."/>
            <person name="Berno A."/>
            <person name="Carpenter J."/>
            <person name="Chen E."/>
            <person name="Cherry J.M."/>
            <person name="Chung E."/>
            <person name="Duncan M."/>
            <person name="Hunicke-Smith S."/>
            <person name="Hyman R.W."/>
            <person name="Komp C."/>
            <person name="Lashkari D."/>
            <person name="Lew H."/>
            <person name="Lin D."/>
            <person name="Mosedale D."/>
            <person name="Nakahara K."/>
            <person name="Namath A."/>
            <person name="Oefner P."/>
            <person name="Oh C."/>
            <person name="Petel F.X."/>
            <person name="Roberts D."/>
            <person name="Schramm S."/>
            <person name="Schroeder M."/>
            <person name="Shogren T."/>
            <person name="Shroff N."/>
            <person name="Winant A."/>
            <person name="Yelton M.A."/>
            <person name="Botstein D."/>
            <person name="Davis R.W."/>
            <person name="Johnston M."/>
            <person name="Andrews S."/>
            <person name="Brinkman R."/>
            <person name="Cooper J."/>
            <person name="Ding H."/>
            <person name="Du Z."/>
            <person name="Favello A."/>
            <person name="Fulton L."/>
            <person name="Gattung S."/>
            <person name="Greco T."/>
            <person name="Hallsworth K."/>
            <person name="Hawkins J."/>
            <person name="Hillier L.W."/>
            <person name="Jier M."/>
            <person name="Johnson D."/>
            <person name="Johnston L."/>
            <person name="Kirsten J."/>
            <person name="Kucaba T."/>
            <person name="Langston Y."/>
            <person name="Latreille P."/>
            <person name="Le T."/>
            <person name="Mardis E."/>
            <person name="Menezes S."/>
            <person name="Miller N."/>
            <person name="Nhan M."/>
            <person name="Pauley A."/>
            <person name="Peluso D."/>
            <person name="Rifkin L."/>
            <person name="Riles L."/>
            <person name="Taich A."/>
            <person name="Trevaskis E."/>
            <person name="Vignati D."/>
            <person name="Wilcox L."/>
            <person name="Wohldman P."/>
            <person name="Vaudin M."/>
            <person name="Wilson R."/>
            <person name="Waterston R."/>
            <person name="Albermann K."/>
            <person name="Hani J."/>
            <person name="Heumann K."/>
            <person name="Kleine K."/>
            <person name="Mewes H.-W."/>
            <person name="Zollner A."/>
            <person name="Zaccaria P."/>
        </authorList>
    </citation>
    <scope>NUCLEOTIDE SEQUENCE [LARGE SCALE GENOMIC DNA]</scope>
    <source>
        <strain>ATCC 204508 / S288c</strain>
    </source>
</reference>
<reference key="2">
    <citation type="journal article" date="2014" name="G3 (Bethesda)">
        <title>The reference genome sequence of Saccharomyces cerevisiae: Then and now.</title>
        <authorList>
            <person name="Engel S.R."/>
            <person name="Dietrich F.S."/>
            <person name="Fisk D.G."/>
            <person name="Binkley G."/>
            <person name="Balakrishnan R."/>
            <person name="Costanzo M.C."/>
            <person name="Dwight S.S."/>
            <person name="Hitz B.C."/>
            <person name="Karra K."/>
            <person name="Nash R.S."/>
            <person name="Weng S."/>
            <person name="Wong E.D."/>
            <person name="Lloyd P."/>
            <person name="Skrzypek M.S."/>
            <person name="Miyasato S.R."/>
            <person name="Simison M."/>
            <person name="Cherry J.M."/>
        </authorList>
    </citation>
    <scope>GENOME REANNOTATION</scope>
    <source>
        <strain>ATCC 204508 / S288c</strain>
    </source>
</reference>
<reference key="3">
    <citation type="journal article" date="2002" name="Mol. Biol. Cell">
        <title>Genomic screen for vacuolar protein sorting genes in Saccharomyces cerevisiae.</title>
        <authorList>
            <person name="Bonangelino C.J."/>
            <person name="Chavez E.M."/>
            <person name="Bonifacino J.S."/>
        </authorList>
    </citation>
    <scope>FUNCTION</scope>
</reference>
<reference key="4">
    <citation type="journal article" date="2003" name="J. Biol. Chem.">
        <title>Bipartite signals mediate subcellular targeting of tail-anchored membrane proteins in Saccharomyces cerevisiae.</title>
        <authorList>
            <person name="Beilharz T."/>
            <person name="Egan B."/>
            <person name="Silver P.A."/>
            <person name="Hofmann K."/>
            <person name="Lithgow T."/>
        </authorList>
    </citation>
    <scope>SUBCELLULAR LOCATION</scope>
</reference>
<reference key="5">
    <citation type="journal article" date="2003" name="Mol. Cell. Biol.">
        <title>Far3 and five interacting proteins prevent premature recovery from pheromone arrest in the budding yeast Saccharomyces cerevisiae.</title>
        <authorList>
            <person name="Kemp H.A."/>
            <person name="Sprague G.F. Jr."/>
        </authorList>
    </citation>
    <scope>FUNCTION</scope>
    <scope>INTERACTION WITH FAR3; FAR7; FAR8; FAR10 AND FAR11</scope>
</reference>
<reference key="6">
    <citation type="journal article" date="2003" name="Nature">
        <title>Global analysis of protein localization in budding yeast.</title>
        <authorList>
            <person name="Huh W.-K."/>
            <person name="Falvo J.V."/>
            <person name="Gerke L.C."/>
            <person name="Carroll A.S."/>
            <person name="Howson R.W."/>
            <person name="Weissman J.S."/>
            <person name="O'Shea E.K."/>
        </authorList>
    </citation>
    <scope>SUBCELLULAR LOCATION [LARGE SCALE ANALYSIS]</scope>
</reference>
<reference key="7">
    <citation type="journal article" date="2003" name="Nature">
        <title>Global analysis of protein expression in yeast.</title>
        <authorList>
            <person name="Ghaemmaghami S."/>
            <person name="Huh W.-K."/>
            <person name="Bower K."/>
            <person name="Howson R.W."/>
            <person name="Belle A."/>
            <person name="Dephoure N."/>
            <person name="O'Shea E.K."/>
            <person name="Weissman J.S."/>
        </authorList>
    </citation>
    <scope>LEVEL OF PROTEIN EXPRESSION [LARGE SCALE ANALYSIS]</scope>
</reference>
<reference key="8">
    <citation type="journal article" date="2008" name="Mol. Cell. Proteomics">
        <title>A multidimensional chromatography technology for in-depth phosphoproteome analysis.</title>
        <authorList>
            <person name="Albuquerque C.P."/>
            <person name="Smolka M.B."/>
            <person name="Payne S.H."/>
            <person name="Bafna V."/>
            <person name="Eng J."/>
            <person name="Zhou H."/>
        </authorList>
    </citation>
    <scope>IDENTIFICATION BY MASS SPECTROMETRY [LARGE SCALE ANALYSIS]</scope>
</reference>
<keyword id="KW-0002">3D-structure</keyword>
<keyword id="KW-0131">Cell cycle</keyword>
<keyword id="KW-0175">Coiled coil</keyword>
<keyword id="KW-0256">Endoplasmic reticulum</keyword>
<keyword id="KW-0472">Membrane</keyword>
<keyword id="KW-0653">Protein transport</keyword>
<keyword id="KW-1185">Reference proteome</keyword>
<keyword id="KW-0812">Transmembrane</keyword>
<keyword id="KW-1133">Transmembrane helix</keyword>
<keyword id="KW-0813">Transport</keyword>